<proteinExistence type="inferred from homology"/>
<organism>
    <name type="scientific">Treponema pallidum (strain Nichols)</name>
    <dbReference type="NCBI Taxonomy" id="243276"/>
    <lineage>
        <taxon>Bacteria</taxon>
        <taxon>Pseudomonadati</taxon>
        <taxon>Spirochaetota</taxon>
        <taxon>Spirochaetia</taxon>
        <taxon>Spirochaetales</taxon>
        <taxon>Treponemataceae</taxon>
        <taxon>Treponema</taxon>
    </lineage>
</organism>
<dbReference type="EMBL" id="AE000520">
    <property type="protein sequence ID" value="AAC65186.1"/>
    <property type="molecule type" value="Genomic_DNA"/>
</dbReference>
<dbReference type="PIR" id="C71356">
    <property type="entry name" value="C71356"/>
</dbReference>
<dbReference type="RefSeq" id="WP_010881648.1">
    <property type="nucleotide sequence ID" value="NC_000919.1"/>
</dbReference>
<dbReference type="STRING" id="243276.TP_0201"/>
<dbReference type="EnsemblBacteria" id="AAC65186">
    <property type="protein sequence ID" value="AAC65186"/>
    <property type="gene ID" value="TP_0201"/>
</dbReference>
<dbReference type="KEGG" id="tpa:TP_0201"/>
<dbReference type="eggNOG" id="COG0094">
    <property type="taxonomic scope" value="Bacteria"/>
</dbReference>
<dbReference type="HOGENOM" id="CLU_061015_2_1_12"/>
<dbReference type="OrthoDB" id="9806626at2"/>
<dbReference type="Proteomes" id="UP000000811">
    <property type="component" value="Chromosome"/>
</dbReference>
<dbReference type="GO" id="GO:1990904">
    <property type="term" value="C:ribonucleoprotein complex"/>
    <property type="evidence" value="ECO:0007669"/>
    <property type="project" value="UniProtKB-KW"/>
</dbReference>
<dbReference type="GO" id="GO:0005840">
    <property type="term" value="C:ribosome"/>
    <property type="evidence" value="ECO:0007669"/>
    <property type="project" value="UniProtKB-KW"/>
</dbReference>
<dbReference type="GO" id="GO:0019843">
    <property type="term" value="F:rRNA binding"/>
    <property type="evidence" value="ECO:0007669"/>
    <property type="project" value="UniProtKB-UniRule"/>
</dbReference>
<dbReference type="GO" id="GO:0003735">
    <property type="term" value="F:structural constituent of ribosome"/>
    <property type="evidence" value="ECO:0007669"/>
    <property type="project" value="InterPro"/>
</dbReference>
<dbReference type="GO" id="GO:0000049">
    <property type="term" value="F:tRNA binding"/>
    <property type="evidence" value="ECO:0007669"/>
    <property type="project" value="UniProtKB-UniRule"/>
</dbReference>
<dbReference type="GO" id="GO:0006412">
    <property type="term" value="P:translation"/>
    <property type="evidence" value="ECO:0007669"/>
    <property type="project" value="UniProtKB-UniRule"/>
</dbReference>
<dbReference type="FunFam" id="3.30.1440.10:FF:000001">
    <property type="entry name" value="50S ribosomal protein L5"/>
    <property type="match status" value="1"/>
</dbReference>
<dbReference type="Gene3D" id="3.30.1440.10">
    <property type="match status" value="1"/>
</dbReference>
<dbReference type="HAMAP" id="MF_01333_B">
    <property type="entry name" value="Ribosomal_uL5_B"/>
    <property type="match status" value="1"/>
</dbReference>
<dbReference type="InterPro" id="IPR002132">
    <property type="entry name" value="Ribosomal_uL5"/>
</dbReference>
<dbReference type="InterPro" id="IPR020930">
    <property type="entry name" value="Ribosomal_uL5_bac-type"/>
</dbReference>
<dbReference type="InterPro" id="IPR031309">
    <property type="entry name" value="Ribosomal_uL5_C"/>
</dbReference>
<dbReference type="InterPro" id="IPR020929">
    <property type="entry name" value="Ribosomal_uL5_CS"/>
</dbReference>
<dbReference type="InterPro" id="IPR022803">
    <property type="entry name" value="Ribosomal_uL5_dom_sf"/>
</dbReference>
<dbReference type="InterPro" id="IPR031310">
    <property type="entry name" value="Ribosomal_uL5_N"/>
</dbReference>
<dbReference type="NCBIfam" id="NF000585">
    <property type="entry name" value="PRK00010.1"/>
    <property type="match status" value="1"/>
</dbReference>
<dbReference type="PANTHER" id="PTHR11994">
    <property type="entry name" value="60S RIBOSOMAL PROTEIN L11-RELATED"/>
    <property type="match status" value="1"/>
</dbReference>
<dbReference type="Pfam" id="PF00281">
    <property type="entry name" value="Ribosomal_L5"/>
    <property type="match status" value="1"/>
</dbReference>
<dbReference type="Pfam" id="PF00673">
    <property type="entry name" value="Ribosomal_L5_C"/>
    <property type="match status" value="1"/>
</dbReference>
<dbReference type="PIRSF" id="PIRSF002161">
    <property type="entry name" value="Ribosomal_L5"/>
    <property type="match status" value="1"/>
</dbReference>
<dbReference type="SUPFAM" id="SSF55282">
    <property type="entry name" value="RL5-like"/>
    <property type="match status" value="1"/>
</dbReference>
<dbReference type="PROSITE" id="PS00358">
    <property type="entry name" value="RIBOSOMAL_L5"/>
    <property type="match status" value="1"/>
</dbReference>
<reference key="1">
    <citation type="journal article" date="1998" name="Science">
        <title>Complete genome sequence of Treponema pallidum, the syphilis spirochete.</title>
        <authorList>
            <person name="Fraser C.M."/>
            <person name="Norris S.J."/>
            <person name="Weinstock G.M."/>
            <person name="White O."/>
            <person name="Sutton G.G."/>
            <person name="Dodson R.J."/>
            <person name="Gwinn M.L."/>
            <person name="Hickey E.K."/>
            <person name="Clayton R.A."/>
            <person name="Ketchum K.A."/>
            <person name="Sodergren E."/>
            <person name="Hardham J.M."/>
            <person name="McLeod M.P."/>
            <person name="Salzberg S.L."/>
            <person name="Peterson J.D."/>
            <person name="Khalak H.G."/>
            <person name="Richardson D.L."/>
            <person name="Howell J.K."/>
            <person name="Chidambaram M."/>
            <person name="Utterback T.R."/>
            <person name="McDonald L.A."/>
            <person name="Artiach P."/>
            <person name="Bowman C."/>
            <person name="Cotton M.D."/>
            <person name="Fujii C."/>
            <person name="Garland S.A."/>
            <person name="Hatch B."/>
            <person name="Horst K."/>
            <person name="Roberts K.M."/>
            <person name="Sandusky M."/>
            <person name="Weidman J.F."/>
            <person name="Smith H.O."/>
            <person name="Venter J.C."/>
        </authorList>
    </citation>
    <scope>NUCLEOTIDE SEQUENCE [LARGE SCALE GENOMIC DNA]</scope>
    <source>
        <strain>Nichols</strain>
    </source>
</reference>
<keyword id="KW-1185">Reference proteome</keyword>
<keyword id="KW-0687">Ribonucleoprotein</keyword>
<keyword id="KW-0689">Ribosomal protein</keyword>
<keyword id="KW-0694">RNA-binding</keyword>
<keyword id="KW-0699">rRNA-binding</keyword>
<keyword id="KW-0820">tRNA-binding</keyword>
<sequence length="185" mass="20804">MTDHSCIPELKVRYVQQIVPDMMRDFGYSTVMQVPKLLKIVLSMGLGEALANRKLLDASVADLGVISGQHAVKTRARKSIANFKLREGNEIGVMVTLRRSRMYEFLHRLINVALPRVKDFRGVSPXGFDGHGNYSMGITEQIIFPEIDFDKIERISGLNVNVVTSAQTDQEARTLLTKLGMPFRK</sequence>
<feature type="chain" id="PRO_0000125018" description="Large ribosomal subunit protein uL5">
    <location>
        <begin position="1"/>
        <end position="185"/>
    </location>
</feature>
<gene>
    <name evidence="1" type="primary">rplE</name>
    <name type="ordered locus">TP_0201</name>
</gene>
<protein>
    <recommendedName>
        <fullName evidence="1">Large ribosomal subunit protein uL5</fullName>
    </recommendedName>
    <alternativeName>
        <fullName evidence="2">50S ribosomal protein L5</fullName>
    </alternativeName>
</protein>
<name>RL5_TREPA</name>
<accession>O83231</accession>
<evidence type="ECO:0000255" key="1">
    <source>
        <dbReference type="HAMAP-Rule" id="MF_01333"/>
    </source>
</evidence>
<evidence type="ECO:0000305" key="2"/>
<comment type="function">
    <text evidence="1">This is one of the proteins that bind and probably mediate the attachment of the 5S RNA into the large ribosomal subunit, where it forms part of the central protuberance. In the 70S ribosome it contacts protein S13 of the 30S subunit (bridge B1b), connecting the 2 subunits; this bridge is implicated in subunit movement. Contacts the P site tRNA; the 5S rRNA and some of its associated proteins might help stabilize positioning of ribosome-bound tRNAs.</text>
</comment>
<comment type="subunit">
    <text evidence="1">Part of the 50S ribosomal subunit; part of the 5S rRNA/L5/L18/L25 subcomplex. Contacts the 5S rRNA and the P site tRNA. Forms a bridge to the 30S subunit in the 70S ribosome.</text>
</comment>
<comment type="similarity">
    <text evidence="1">Belongs to the universal ribosomal protein uL5 family.</text>
</comment>